<name>TX313_LYCSI</name>
<keyword id="KW-1015">Disulfide bond</keyword>
<keyword id="KW-0960">Knottin</keyword>
<keyword id="KW-0964">Secreted</keyword>
<keyword id="KW-0732">Signal</keyword>
<keyword id="KW-0800">Toxin</keyword>
<organism>
    <name type="scientific">Lycosa singoriensis</name>
    <name type="common">Wolf spider</name>
    <name type="synonym">Aranea singoriensis</name>
    <dbReference type="NCBI Taxonomy" id="434756"/>
    <lineage>
        <taxon>Eukaryota</taxon>
        <taxon>Metazoa</taxon>
        <taxon>Ecdysozoa</taxon>
        <taxon>Arthropoda</taxon>
        <taxon>Chelicerata</taxon>
        <taxon>Arachnida</taxon>
        <taxon>Araneae</taxon>
        <taxon>Araneomorphae</taxon>
        <taxon>Entelegynae</taxon>
        <taxon>Lycosoidea</taxon>
        <taxon>Lycosidae</taxon>
        <taxon>Lycosa</taxon>
    </lineage>
</organism>
<comment type="subcellular location">
    <subcellularLocation>
        <location evidence="1">Secreted</location>
    </subcellularLocation>
</comment>
<comment type="tissue specificity">
    <text>Expressed by the venom gland.</text>
</comment>
<comment type="domain">
    <text evidence="1">The presence of a 'disulfide through disulfide knot' structurally defines this protein as a knottin.</text>
</comment>
<comment type="similarity">
    <text evidence="3">Belongs to the neurotoxin 19 (CSTX) family. 01 subfamily.</text>
</comment>
<proteinExistence type="evidence at transcript level"/>
<evidence type="ECO:0000250" key="1"/>
<evidence type="ECO:0000255" key="2"/>
<evidence type="ECO:0000305" key="3"/>
<sequence length="115" mass="13224">MKFVLLFGVLLVTLFSYSSAEMLDDFDQADEDELLSLIEKEEARAKECTPRFCDCSHDRHSCCRSELFKDVCTCFYPEGGDNEVCTCQQPKHLKYMEKAADKAKKFGGKIKKWFG</sequence>
<accession>B6DCQ8</accession>
<feature type="signal peptide" evidence="2">
    <location>
        <begin position="1"/>
        <end position="20"/>
    </location>
</feature>
<feature type="propeptide" id="PRO_0000401631" evidence="1">
    <location>
        <begin position="21"/>
        <end position="44"/>
    </location>
</feature>
<feature type="chain" id="PRO_0000401632" description="U3-lycotoxin-Ls1c">
    <location>
        <begin position="45"/>
        <end position="115"/>
    </location>
</feature>
<feature type="disulfide bond" evidence="1">
    <location>
        <begin position="48"/>
        <end position="63"/>
    </location>
</feature>
<feature type="disulfide bond" evidence="1">
    <location>
        <begin position="55"/>
        <end position="72"/>
    </location>
</feature>
<feature type="disulfide bond" evidence="1">
    <location>
        <begin position="62"/>
        <end position="87"/>
    </location>
</feature>
<feature type="disulfide bond" evidence="1">
    <location>
        <begin position="74"/>
        <end position="85"/>
    </location>
</feature>
<protein>
    <recommendedName>
        <fullName>U3-lycotoxin-Ls1c</fullName>
    </recommendedName>
    <alternativeName>
        <fullName>Toxin-like structure LSTX-B13</fullName>
    </alternativeName>
</protein>
<reference key="1">
    <citation type="journal article" date="2010" name="Zoology">
        <title>Transcriptome analysis of the venom glands of the Chinese wolf spider Lycosa singoriensis.</title>
        <authorList>
            <person name="Zhang Y."/>
            <person name="Chen J."/>
            <person name="Tang X."/>
            <person name="Wang F."/>
            <person name="Jiang L."/>
            <person name="Xiong X."/>
            <person name="Wang M."/>
            <person name="Rong M."/>
            <person name="Liu Z."/>
            <person name="Liang S."/>
        </authorList>
    </citation>
    <scope>NUCLEOTIDE SEQUENCE [LARGE SCALE MRNA]</scope>
    <source>
        <tissue>Venom gland</tissue>
    </source>
</reference>
<dbReference type="EMBL" id="EU925992">
    <property type="protein sequence ID" value="ACI41324.1"/>
    <property type="molecule type" value="mRNA"/>
</dbReference>
<dbReference type="EMBL" id="FM863996">
    <property type="protein sequence ID" value="CAS03594.1"/>
    <property type="molecule type" value="mRNA"/>
</dbReference>
<dbReference type="SMR" id="B6DCQ8"/>
<dbReference type="ArachnoServer" id="AS000941">
    <property type="toxin name" value="U3-lycotoxin-Ls1c"/>
</dbReference>
<dbReference type="GO" id="GO:0005576">
    <property type="term" value="C:extracellular region"/>
    <property type="evidence" value="ECO:0007669"/>
    <property type="project" value="UniProtKB-SubCell"/>
</dbReference>
<dbReference type="GO" id="GO:0090729">
    <property type="term" value="F:toxin activity"/>
    <property type="evidence" value="ECO:0007669"/>
    <property type="project" value="UniProtKB-KW"/>
</dbReference>